<dbReference type="EMBL" id="U51003">
    <property type="protein sequence ID" value="AAB40902.1"/>
    <property type="molecule type" value="Genomic_DNA"/>
</dbReference>
<dbReference type="EMBL" id="AK297503">
    <property type="protein sequence ID" value="BAG59916.1"/>
    <property type="molecule type" value="mRNA"/>
</dbReference>
<dbReference type="EMBL" id="AK316129">
    <property type="protein sequence ID" value="BAH14500.1"/>
    <property type="molecule type" value="mRNA"/>
</dbReference>
<dbReference type="EMBL" id="AC104801">
    <property type="status" value="NOT_ANNOTATED_CDS"/>
    <property type="molecule type" value="Genomic_DNA"/>
</dbReference>
<dbReference type="EMBL" id="BC032558">
    <property type="protein sequence ID" value="AAH32558.1"/>
    <property type="molecule type" value="mRNA"/>
</dbReference>
<dbReference type="EMBL" id="L07919">
    <property type="protein sequence ID" value="AAA19663.1"/>
    <property type="molecule type" value="mRNA"/>
</dbReference>
<dbReference type="CCDS" id="CCDS2248.1">
    <molecule id="Q07687-1"/>
</dbReference>
<dbReference type="PIR" id="B53495">
    <property type="entry name" value="B53495"/>
</dbReference>
<dbReference type="PIR" id="G02469">
    <property type="entry name" value="G02469"/>
</dbReference>
<dbReference type="RefSeq" id="NP_004396.1">
    <molecule id="Q07687-1"/>
    <property type="nucleotide sequence ID" value="NM_004405.4"/>
</dbReference>
<dbReference type="SMR" id="Q07687"/>
<dbReference type="BioGRID" id="108090">
    <property type="interactions" value="17"/>
</dbReference>
<dbReference type="FunCoup" id="Q07687">
    <property type="interactions" value="273"/>
</dbReference>
<dbReference type="IntAct" id="Q07687">
    <property type="interactions" value="12"/>
</dbReference>
<dbReference type="MINT" id="Q07687"/>
<dbReference type="STRING" id="9606.ENSP00000234198"/>
<dbReference type="iPTMnet" id="Q07687"/>
<dbReference type="PhosphoSitePlus" id="Q07687"/>
<dbReference type="BioMuta" id="DLX2"/>
<dbReference type="DMDM" id="2506529"/>
<dbReference type="jPOST" id="Q07687"/>
<dbReference type="MassIVE" id="Q07687"/>
<dbReference type="PaxDb" id="9606-ENSP00000234198"/>
<dbReference type="PeptideAtlas" id="Q07687"/>
<dbReference type="ProteomicsDB" id="58526">
    <molecule id="Q07687-1"/>
</dbReference>
<dbReference type="Pumba" id="Q07687"/>
<dbReference type="Antibodypedia" id="19409">
    <property type="antibodies" value="357 antibodies from 32 providers"/>
</dbReference>
<dbReference type="DNASU" id="1746"/>
<dbReference type="Ensembl" id="ENST00000234198.9">
    <molecule id="Q07687-1"/>
    <property type="protein sequence ID" value="ENSP00000234198.4"/>
    <property type="gene ID" value="ENSG00000115844.11"/>
</dbReference>
<dbReference type="Ensembl" id="ENST00000466293.2">
    <molecule id="Q07687-2"/>
    <property type="protein sequence ID" value="ENSP00000446904.1"/>
    <property type="gene ID" value="ENSG00000115844.11"/>
</dbReference>
<dbReference type="GeneID" id="1746"/>
<dbReference type="KEGG" id="hsa:1746"/>
<dbReference type="MANE-Select" id="ENST00000234198.9">
    <property type="protein sequence ID" value="ENSP00000234198.4"/>
    <property type="RefSeq nucleotide sequence ID" value="NM_004405.4"/>
    <property type="RefSeq protein sequence ID" value="NP_004396.1"/>
</dbReference>
<dbReference type="UCSC" id="uc010zdx.2">
    <molecule id="Q07687-1"/>
    <property type="organism name" value="human"/>
</dbReference>
<dbReference type="AGR" id="HGNC:2915"/>
<dbReference type="CTD" id="1746"/>
<dbReference type="DisGeNET" id="1746"/>
<dbReference type="GeneCards" id="DLX2"/>
<dbReference type="HGNC" id="HGNC:2915">
    <property type="gene designation" value="DLX2"/>
</dbReference>
<dbReference type="HPA" id="ENSG00000115844">
    <property type="expression patterns" value="Tissue enhanced (brain)"/>
</dbReference>
<dbReference type="MIM" id="126255">
    <property type="type" value="gene"/>
</dbReference>
<dbReference type="neXtProt" id="NX_Q07687"/>
<dbReference type="OpenTargets" id="ENSG00000115844"/>
<dbReference type="PharmGKB" id="PA27370"/>
<dbReference type="VEuPathDB" id="HostDB:ENSG00000115844"/>
<dbReference type="eggNOG" id="KOG0850">
    <property type="taxonomic scope" value="Eukaryota"/>
</dbReference>
<dbReference type="GeneTree" id="ENSGT00940000160127"/>
<dbReference type="HOGENOM" id="CLU_074733_1_1_1"/>
<dbReference type="InParanoid" id="Q07687"/>
<dbReference type="OMA" id="YSWYHQA"/>
<dbReference type="OrthoDB" id="6159439at2759"/>
<dbReference type="PAN-GO" id="Q07687">
    <property type="GO annotations" value="5 GO annotations based on evolutionary models"/>
</dbReference>
<dbReference type="PhylomeDB" id="Q07687"/>
<dbReference type="TreeFam" id="TF350606"/>
<dbReference type="PathwayCommons" id="Q07687"/>
<dbReference type="SignaLink" id="Q07687"/>
<dbReference type="SIGNOR" id="Q07687"/>
<dbReference type="BioGRID-ORCS" id="1746">
    <property type="hits" value="19 hits in 1184 CRISPR screens"/>
</dbReference>
<dbReference type="GeneWiki" id="DLX2"/>
<dbReference type="GenomeRNAi" id="1746"/>
<dbReference type="Pharos" id="Q07687">
    <property type="development level" value="Tbio"/>
</dbReference>
<dbReference type="PRO" id="PR:Q07687"/>
<dbReference type="Proteomes" id="UP000005640">
    <property type="component" value="Chromosome 2"/>
</dbReference>
<dbReference type="RNAct" id="Q07687">
    <property type="molecule type" value="protein"/>
</dbReference>
<dbReference type="Bgee" id="ENSG00000115844">
    <property type="expression patterns" value="Expressed in primordial germ cell in gonad and 75 other cell types or tissues"/>
</dbReference>
<dbReference type="ExpressionAtlas" id="Q07687">
    <property type="expression patterns" value="baseline and differential"/>
</dbReference>
<dbReference type="GO" id="GO:0000785">
    <property type="term" value="C:chromatin"/>
    <property type="evidence" value="ECO:0000247"/>
    <property type="project" value="NTNU_SB"/>
</dbReference>
<dbReference type="GO" id="GO:0005634">
    <property type="term" value="C:nucleus"/>
    <property type="evidence" value="ECO:0007669"/>
    <property type="project" value="UniProtKB-SubCell"/>
</dbReference>
<dbReference type="GO" id="GO:0003682">
    <property type="term" value="F:chromatin binding"/>
    <property type="evidence" value="ECO:0007669"/>
    <property type="project" value="Ensembl"/>
</dbReference>
<dbReference type="GO" id="GO:0001228">
    <property type="term" value="F:DNA-binding transcription activator activity, RNA polymerase II-specific"/>
    <property type="evidence" value="ECO:0007669"/>
    <property type="project" value="Ensembl"/>
</dbReference>
<dbReference type="GO" id="GO:0003700">
    <property type="term" value="F:DNA-binding transcription factor activity"/>
    <property type="evidence" value="ECO:0000304"/>
    <property type="project" value="ProtInc"/>
</dbReference>
<dbReference type="GO" id="GO:0000981">
    <property type="term" value="F:DNA-binding transcription factor activity, RNA polymerase II-specific"/>
    <property type="evidence" value="ECO:0000247"/>
    <property type="project" value="NTNU_SB"/>
</dbReference>
<dbReference type="GO" id="GO:0000978">
    <property type="term" value="F:RNA polymerase II cis-regulatory region sequence-specific DNA binding"/>
    <property type="evidence" value="ECO:0000318"/>
    <property type="project" value="GO_Central"/>
</dbReference>
<dbReference type="GO" id="GO:1990837">
    <property type="term" value="F:sequence-specific double-stranded DNA binding"/>
    <property type="evidence" value="ECO:0000314"/>
    <property type="project" value="ARUK-UCL"/>
</dbReference>
<dbReference type="GO" id="GO:0003727">
    <property type="term" value="F:single-stranded RNA binding"/>
    <property type="evidence" value="ECO:0007669"/>
    <property type="project" value="Ensembl"/>
</dbReference>
<dbReference type="GO" id="GO:0000976">
    <property type="term" value="F:transcription cis-regulatory region binding"/>
    <property type="evidence" value="ECO:0000250"/>
    <property type="project" value="UniProtKB"/>
</dbReference>
<dbReference type="GO" id="GO:0007420">
    <property type="term" value="P:brain development"/>
    <property type="evidence" value="ECO:0000304"/>
    <property type="project" value="ProtInc"/>
</dbReference>
<dbReference type="GO" id="GO:0048755">
    <property type="term" value="P:branching morphogenesis of a nerve"/>
    <property type="evidence" value="ECO:0007669"/>
    <property type="project" value="Ensembl"/>
</dbReference>
<dbReference type="GO" id="GO:0051216">
    <property type="term" value="P:cartilage development"/>
    <property type="evidence" value="ECO:0007669"/>
    <property type="project" value="Ensembl"/>
</dbReference>
<dbReference type="GO" id="GO:0030154">
    <property type="term" value="P:cell differentiation"/>
    <property type="evidence" value="ECO:0000318"/>
    <property type="project" value="GO_Central"/>
</dbReference>
<dbReference type="GO" id="GO:0021893">
    <property type="term" value="P:cerebral cortex GABAergic interneuron fate commitment"/>
    <property type="evidence" value="ECO:0007669"/>
    <property type="project" value="Ensembl"/>
</dbReference>
<dbReference type="GO" id="GO:0048701">
    <property type="term" value="P:embryonic cranial skeleton morphogenesis"/>
    <property type="evidence" value="ECO:0007669"/>
    <property type="project" value="Ensembl"/>
</dbReference>
<dbReference type="GO" id="GO:0048706">
    <property type="term" value="P:embryonic skeletal system development"/>
    <property type="evidence" value="ECO:0000318"/>
    <property type="project" value="GO_Central"/>
</dbReference>
<dbReference type="GO" id="GO:0021766">
    <property type="term" value="P:hippocampus development"/>
    <property type="evidence" value="ECO:0007669"/>
    <property type="project" value="Ensembl"/>
</dbReference>
<dbReference type="GO" id="GO:0045746">
    <property type="term" value="P:negative regulation of Notch signaling pathway"/>
    <property type="evidence" value="ECO:0007669"/>
    <property type="project" value="Ensembl"/>
</dbReference>
<dbReference type="GO" id="GO:0048715">
    <property type="term" value="P:negative regulation of oligodendrocyte differentiation"/>
    <property type="evidence" value="ECO:0007669"/>
    <property type="project" value="Ensembl"/>
</dbReference>
<dbReference type="GO" id="GO:0046533">
    <property type="term" value="P:negative regulation of photoreceptor cell differentiation"/>
    <property type="evidence" value="ECO:0000250"/>
    <property type="project" value="UniProtKB"/>
</dbReference>
<dbReference type="GO" id="GO:0000122">
    <property type="term" value="P:negative regulation of transcription by RNA polymerase II"/>
    <property type="evidence" value="ECO:0007669"/>
    <property type="project" value="Ensembl"/>
</dbReference>
<dbReference type="GO" id="GO:0014016">
    <property type="term" value="P:neuroblast differentiation"/>
    <property type="evidence" value="ECO:0007669"/>
    <property type="project" value="Ensembl"/>
</dbReference>
<dbReference type="GO" id="GO:0007219">
    <property type="term" value="P:Notch signaling pathway"/>
    <property type="evidence" value="ECO:0007669"/>
    <property type="project" value="Ensembl"/>
</dbReference>
<dbReference type="GO" id="GO:0042475">
    <property type="term" value="P:odontogenesis of dentin-containing tooth"/>
    <property type="evidence" value="ECO:0007669"/>
    <property type="project" value="Ensembl"/>
</dbReference>
<dbReference type="GO" id="GO:0021772">
    <property type="term" value="P:olfactory bulb development"/>
    <property type="evidence" value="ECO:0007669"/>
    <property type="project" value="Ensembl"/>
</dbReference>
<dbReference type="GO" id="GO:0048709">
    <property type="term" value="P:oligodendrocyte differentiation"/>
    <property type="evidence" value="ECO:0007669"/>
    <property type="project" value="Ensembl"/>
</dbReference>
<dbReference type="GO" id="GO:1902871">
    <property type="term" value="P:positive regulation of amacrine cell differentiation"/>
    <property type="evidence" value="ECO:0000250"/>
    <property type="project" value="UniProtKB"/>
</dbReference>
<dbReference type="GO" id="GO:0045597">
    <property type="term" value="P:positive regulation of cell differentiation"/>
    <property type="evidence" value="ECO:0000250"/>
    <property type="project" value="UniProtKB"/>
</dbReference>
<dbReference type="GO" id="GO:0045944">
    <property type="term" value="P:positive regulation of transcription by RNA polymerase II"/>
    <property type="evidence" value="ECO:0000250"/>
    <property type="project" value="UniProtKB"/>
</dbReference>
<dbReference type="GO" id="GO:0009954">
    <property type="term" value="P:proximal/distal pattern formation"/>
    <property type="evidence" value="ECO:0007669"/>
    <property type="project" value="Ensembl"/>
</dbReference>
<dbReference type="GO" id="GO:0006357">
    <property type="term" value="P:regulation of transcription by RNA polymerase II"/>
    <property type="evidence" value="ECO:0000318"/>
    <property type="project" value="GO_Central"/>
</dbReference>
<dbReference type="GO" id="GO:0021544">
    <property type="term" value="P:subpallium development"/>
    <property type="evidence" value="ECO:0007669"/>
    <property type="project" value="Ensembl"/>
</dbReference>
<dbReference type="CDD" id="cd00086">
    <property type="entry name" value="homeodomain"/>
    <property type="match status" value="1"/>
</dbReference>
<dbReference type="FunFam" id="1.10.10.60:FF:000048">
    <property type="entry name" value="Distal-less homeobox 2"/>
    <property type="match status" value="1"/>
</dbReference>
<dbReference type="Gene3D" id="1.10.10.60">
    <property type="entry name" value="Homeodomain-like"/>
    <property type="match status" value="1"/>
</dbReference>
<dbReference type="InterPro" id="IPR050460">
    <property type="entry name" value="Distal-less_Homeobox_TF"/>
</dbReference>
<dbReference type="InterPro" id="IPR022135">
    <property type="entry name" value="Distal-less_N"/>
</dbReference>
<dbReference type="InterPro" id="IPR001356">
    <property type="entry name" value="HD"/>
</dbReference>
<dbReference type="InterPro" id="IPR020479">
    <property type="entry name" value="HD_metazoa"/>
</dbReference>
<dbReference type="InterPro" id="IPR017970">
    <property type="entry name" value="Homeobox_CS"/>
</dbReference>
<dbReference type="InterPro" id="IPR009057">
    <property type="entry name" value="Homeodomain-like_sf"/>
</dbReference>
<dbReference type="InterPro" id="IPR000047">
    <property type="entry name" value="HTH_motif"/>
</dbReference>
<dbReference type="PANTHER" id="PTHR24327">
    <property type="entry name" value="HOMEOBOX PROTEIN"/>
    <property type="match status" value="1"/>
</dbReference>
<dbReference type="PANTHER" id="PTHR24327:SF23">
    <property type="entry name" value="HOMEOBOX PROTEIN DLX-2"/>
    <property type="match status" value="1"/>
</dbReference>
<dbReference type="Pfam" id="PF12413">
    <property type="entry name" value="DLL_N"/>
    <property type="match status" value="1"/>
</dbReference>
<dbReference type="Pfam" id="PF00046">
    <property type="entry name" value="Homeodomain"/>
    <property type="match status" value="1"/>
</dbReference>
<dbReference type="PRINTS" id="PR00024">
    <property type="entry name" value="HOMEOBOX"/>
</dbReference>
<dbReference type="PRINTS" id="PR00031">
    <property type="entry name" value="HTHREPRESSR"/>
</dbReference>
<dbReference type="SMART" id="SM00389">
    <property type="entry name" value="HOX"/>
    <property type="match status" value="1"/>
</dbReference>
<dbReference type="SUPFAM" id="SSF46689">
    <property type="entry name" value="Homeodomain-like"/>
    <property type="match status" value="1"/>
</dbReference>
<dbReference type="PROSITE" id="PS00027">
    <property type="entry name" value="HOMEOBOX_1"/>
    <property type="match status" value="1"/>
</dbReference>
<dbReference type="PROSITE" id="PS50071">
    <property type="entry name" value="HOMEOBOX_2"/>
    <property type="match status" value="1"/>
</dbReference>
<sequence length="328" mass="34243">MTGVFDSLVADMHSTQIAASSTYHQHQQPPSGGGAGPGGNSSSSSSLHKPQESPTLPVSTATDSSYYTNQQHPAGGGGGGGSPYAHMGSYQYQASGLNNVPYSAKSSYDLGYTAAYTSYAPYGTSSSPANNEPEKEDLEPEIRIVNGKPKKVRKPRTIYSSFQLAALQRRFQKTQYLALPERAELAASLGLTQTQVKIWFQNRRSKFKKMWKSGEIPSEQHPGASASPPCASPPVSAPASWDFGVPQRMAGGGGPGSGGSGAGSSGSSPSSAASAFLGNYPWYHQTSGSASHLQATAPLLHPTQTPQPHHHHHHHGGGGAPVSAGTIF</sequence>
<comment type="function">
    <text evidence="1">Acts as a transcriptional activator (By similarity). Activates transcription of CGA/alpha-GSU, via binding to the downstream activin regulatory element (DARE) in the gene promoter (By similarity). Plays a role in terminal differentiation of interneurons, such as amacrine and bipolar cells in the developing retina. Likely to play a regulatory role in the development of the ventral forebrain (By similarity). May play a role in craniofacial patterning and morphogenesis (By similarity).</text>
</comment>
<comment type="subunit">
    <text evidence="1">Interacts (via homeobox DNA-binding domain) with POU4F2; this interaction enhances retinal ganglion cell (RGC) differentiation.</text>
</comment>
<comment type="interaction">
    <interactant intactId="EBI-3908234">
        <id>Q07687</id>
    </interactant>
    <interactant intactId="EBI-747754">
        <id>P28799</id>
        <label>GRN</label>
    </interactant>
    <organismsDiffer>false</organismsDiffer>
    <experiments>3</experiments>
</comment>
<comment type="subcellular location">
    <subcellularLocation>
        <location evidence="5">Nucleus</location>
    </subcellularLocation>
</comment>
<comment type="alternative products">
    <event type="alternative splicing"/>
    <isoform>
        <id>Q07687-1</id>
        <name>1</name>
        <sequence type="displayed"/>
    </isoform>
    <isoform>
        <id>Q07687-2</id>
        <name>2</name>
        <sequence type="described" ref="VSP_054287 VSP_054288"/>
    </isoform>
</comment>
<comment type="similarity">
    <text evidence="5">Belongs to the distal-less homeobox family.</text>
</comment>
<organism>
    <name type="scientific">Homo sapiens</name>
    <name type="common">Human</name>
    <dbReference type="NCBI Taxonomy" id="9606"/>
    <lineage>
        <taxon>Eukaryota</taxon>
        <taxon>Metazoa</taxon>
        <taxon>Chordata</taxon>
        <taxon>Craniata</taxon>
        <taxon>Vertebrata</taxon>
        <taxon>Euteleostomi</taxon>
        <taxon>Mammalia</taxon>
        <taxon>Eutheria</taxon>
        <taxon>Euarchontoglires</taxon>
        <taxon>Primates</taxon>
        <taxon>Haplorrhini</taxon>
        <taxon>Catarrhini</taxon>
        <taxon>Hominidae</taxon>
        <taxon>Homo</taxon>
    </lineage>
</organism>
<reference key="1">
    <citation type="journal article" date="1996" name="Genomics">
        <title>Sequence, organization, and transcription of the Dlx-1 and Dlx-2 locus.</title>
        <authorList>
            <person name="McGuinness T."/>
            <person name="Porteus M.H."/>
            <person name="Smiga S."/>
            <person name="Bulfone A."/>
            <person name="Kingsley C."/>
            <person name="Qiu M."/>
            <person name="Liu J.K."/>
            <person name="Long J.E."/>
            <person name="Xu D."/>
            <person name="Rubenstein J.L.R."/>
        </authorList>
    </citation>
    <scope>NUCLEOTIDE SEQUENCE [GENOMIC DNA]</scope>
</reference>
<reference key="2">
    <citation type="journal article" date="2004" name="Nat. Genet.">
        <title>Complete sequencing and characterization of 21,243 full-length human cDNAs.</title>
        <authorList>
            <person name="Ota T."/>
            <person name="Suzuki Y."/>
            <person name="Nishikawa T."/>
            <person name="Otsuki T."/>
            <person name="Sugiyama T."/>
            <person name="Irie R."/>
            <person name="Wakamatsu A."/>
            <person name="Hayashi K."/>
            <person name="Sato H."/>
            <person name="Nagai K."/>
            <person name="Kimura K."/>
            <person name="Makita H."/>
            <person name="Sekine M."/>
            <person name="Obayashi M."/>
            <person name="Nishi T."/>
            <person name="Shibahara T."/>
            <person name="Tanaka T."/>
            <person name="Ishii S."/>
            <person name="Yamamoto J."/>
            <person name="Saito K."/>
            <person name="Kawai Y."/>
            <person name="Isono Y."/>
            <person name="Nakamura Y."/>
            <person name="Nagahari K."/>
            <person name="Murakami K."/>
            <person name="Yasuda T."/>
            <person name="Iwayanagi T."/>
            <person name="Wagatsuma M."/>
            <person name="Shiratori A."/>
            <person name="Sudo H."/>
            <person name="Hosoiri T."/>
            <person name="Kaku Y."/>
            <person name="Kodaira H."/>
            <person name="Kondo H."/>
            <person name="Sugawara M."/>
            <person name="Takahashi M."/>
            <person name="Kanda K."/>
            <person name="Yokoi T."/>
            <person name="Furuya T."/>
            <person name="Kikkawa E."/>
            <person name="Omura Y."/>
            <person name="Abe K."/>
            <person name="Kamihara K."/>
            <person name="Katsuta N."/>
            <person name="Sato K."/>
            <person name="Tanikawa M."/>
            <person name="Yamazaki M."/>
            <person name="Ninomiya K."/>
            <person name="Ishibashi T."/>
            <person name="Yamashita H."/>
            <person name="Murakawa K."/>
            <person name="Fujimori K."/>
            <person name="Tanai H."/>
            <person name="Kimata M."/>
            <person name="Watanabe M."/>
            <person name="Hiraoka S."/>
            <person name="Chiba Y."/>
            <person name="Ishida S."/>
            <person name="Ono Y."/>
            <person name="Takiguchi S."/>
            <person name="Watanabe S."/>
            <person name="Yosida M."/>
            <person name="Hotuta T."/>
            <person name="Kusano J."/>
            <person name="Kanehori K."/>
            <person name="Takahashi-Fujii A."/>
            <person name="Hara H."/>
            <person name="Tanase T.-O."/>
            <person name="Nomura Y."/>
            <person name="Togiya S."/>
            <person name="Komai F."/>
            <person name="Hara R."/>
            <person name="Takeuchi K."/>
            <person name="Arita M."/>
            <person name="Imose N."/>
            <person name="Musashino K."/>
            <person name="Yuuki H."/>
            <person name="Oshima A."/>
            <person name="Sasaki N."/>
            <person name="Aotsuka S."/>
            <person name="Yoshikawa Y."/>
            <person name="Matsunawa H."/>
            <person name="Ichihara T."/>
            <person name="Shiohata N."/>
            <person name="Sano S."/>
            <person name="Moriya S."/>
            <person name="Momiyama H."/>
            <person name="Satoh N."/>
            <person name="Takami S."/>
            <person name="Terashima Y."/>
            <person name="Suzuki O."/>
            <person name="Nakagawa S."/>
            <person name="Senoh A."/>
            <person name="Mizoguchi H."/>
            <person name="Goto Y."/>
            <person name="Shimizu F."/>
            <person name="Wakebe H."/>
            <person name="Hishigaki H."/>
            <person name="Watanabe T."/>
            <person name="Sugiyama A."/>
            <person name="Takemoto M."/>
            <person name="Kawakami B."/>
            <person name="Yamazaki M."/>
            <person name="Watanabe K."/>
            <person name="Kumagai A."/>
            <person name="Itakura S."/>
            <person name="Fukuzumi Y."/>
            <person name="Fujimori Y."/>
            <person name="Komiyama M."/>
            <person name="Tashiro H."/>
            <person name="Tanigami A."/>
            <person name="Fujiwara T."/>
            <person name="Ono T."/>
            <person name="Yamada K."/>
            <person name="Fujii Y."/>
            <person name="Ozaki K."/>
            <person name="Hirao M."/>
            <person name="Ohmori Y."/>
            <person name="Kawabata A."/>
            <person name="Hikiji T."/>
            <person name="Kobatake N."/>
            <person name="Inagaki H."/>
            <person name="Ikema Y."/>
            <person name="Okamoto S."/>
            <person name="Okitani R."/>
            <person name="Kawakami T."/>
            <person name="Noguchi S."/>
            <person name="Itoh T."/>
            <person name="Shigeta K."/>
            <person name="Senba T."/>
            <person name="Matsumura K."/>
            <person name="Nakajima Y."/>
            <person name="Mizuno T."/>
            <person name="Morinaga M."/>
            <person name="Sasaki M."/>
            <person name="Togashi T."/>
            <person name="Oyama M."/>
            <person name="Hata H."/>
            <person name="Watanabe M."/>
            <person name="Komatsu T."/>
            <person name="Mizushima-Sugano J."/>
            <person name="Satoh T."/>
            <person name="Shirai Y."/>
            <person name="Takahashi Y."/>
            <person name="Nakagawa K."/>
            <person name="Okumura K."/>
            <person name="Nagase T."/>
            <person name="Nomura N."/>
            <person name="Kikuchi H."/>
            <person name="Masuho Y."/>
            <person name="Yamashita R."/>
            <person name="Nakai K."/>
            <person name="Yada T."/>
            <person name="Nakamura Y."/>
            <person name="Ohara O."/>
            <person name="Isogai T."/>
            <person name="Sugano S."/>
        </authorList>
    </citation>
    <scope>NUCLEOTIDE SEQUENCE [LARGE SCALE MRNA] (ISOFORM 2)</scope>
    <source>
        <tissue>Brain</tissue>
        <tissue>Tongue</tissue>
    </source>
</reference>
<reference key="3">
    <citation type="journal article" date="2005" name="Nature">
        <title>Generation and annotation of the DNA sequences of human chromosomes 2 and 4.</title>
        <authorList>
            <person name="Hillier L.W."/>
            <person name="Graves T.A."/>
            <person name="Fulton R.S."/>
            <person name="Fulton L.A."/>
            <person name="Pepin K.H."/>
            <person name="Minx P."/>
            <person name="Wagner-McPherson C."/>
            <person name="Layman D."/>
            <person name="Wylie K."/>
            <person name="Sekhon M."/>
            <person name="Becker M.C."/>
            <person name="Fewell G.A."/>
            <person name="Delehaunty K.D."/>
            <person name="Miner T.L."/>
            <person name="Nash W.E."/>
            <person name="Kremitzki C."/>
            <person name="Oddy L."/>
            <person name="Du H."/>
            <person name="Sun H."/>
            <person name="Bradshaw-Cordum H."/>
            <person name="Ali J."/>
            <person name="Carter J."/>
            <person name="Cordes M."/>
            <person name="Harris A."/>
            <person name="Isak A."/>
            <person name="van Brunt A."/>
            <person name="Nguyen C."/>
            <person name="Du F."/>
            <person name="Courtney L."/>
            <person name="Kalicki J."/>
            <person name="Ozersky P."/>
            <person name="Abbott S."/>
            <person name="Armstrong J."/>
            <person name="Belter E.A."/>
            <person name="Caruso L."/>
            <person name="Cedroni M."/>
            <person name="Cotton M."/>
            <person name="Davidson T."/>
            <person name="Desai A."/>
            <person name="Elliott G."/>
            <person name="Erb T."/>
            <person name="Fronick C."/>
            <person name="Gaige T."/>
            <person name="Haakenson W."/>
            <person name="Haglund K."/>
            <person name="Holmes A."/>
            <person name="Harkins R."/>
            <person name="Kim K."/>
            <person name="Kruchowski S.S."/>
            <person name="Strong C.M."/>
            <person name="Grewal N."/>
            <person name="Goyea E."/>
            <person name="Hou S."/>
            <person name="Levy A."/>
            <person name="Martinka S."/>
            <person name="Mead K."/>
            <person name="McLellan M.D."/>
            <person name="Meyer R."/>
            <person name="Randall-Maher J."/>
            <person name="Tomlinson C."/>
            <person name="Dauphin-Kohlberg S."/>
            <person name="Kozlowicz-Reilly A."/>
            <person name="Shah N."/>
            <person name="Swearengen-Shahid S."/>
            <person name="Snider J."/>
            <person name="Strong J.T."/>
            <person name="Thompson J."/>
            <person name="Yoakum M."/>
            <person name="Leonard S."/>
            <person name="Pearman C."/>
            <person name="Trani L."/>
            <person name="Radionenko M."/>
            <person name="Waligorski J.E."/>
            <person name="Wang C."/>
            <person name="Rock S.M."/>
            <person name="Tin-Wollam A.-M."/>
            <person name="Maupin R."/>
            <person name="Latreille P."/>
            <person name="Wendl M.C."/>
            <person name="Yang S.-P."/>
            <person name="Pohl C."/>
            <person name="Wallis J.W."/>
            <person name="Spieth J."/>
            <person name="Bieri T.A."/>
            <person name="Berkowicz N."/>
            <person name="Nelson J.O."/>
            <person name="Osborne J."/>
            <person name="Ding L."/>
            <person name="Meyer R."/>
            <person name="Sabo A."/>
            <person name="Shotland Y."/>
            <person name="Sinha P."/>
            <person name="Wohldmann P.E."/>
            <person name="Cook L.L."/>
            <person name="Hickenbotham M.T."/>
            <person name="Eldred J."/>
            <person name="Williams D."/>
            <person name="Jones T.A."/>
            <person name="She X."/>
            <person name="Ciccarelli F.D."/>
            <person name="Izaurralde E."/>
            <person name="Taylor J."/>
            <person name="Schmutz J."/>
            <person name="Myers R.M."/>
            <person name="Cox D.R."/>
            <person name="Huang X."/>
            <person name="McPherson J.D."/>
            <person name="Mardis E.R."/>
            <person name="Clifton S.W."/>
            <person name="Warren W.C."/>
            <person name="Chinwalla A.T."/>
            <person name="Eddy S.R."/>
            <person name="Marra M.A."/>
            <person name="Ovcharenko I."/>
            <person name="Furey T.S."/>
            <person name="Miller W."/>
            <person name="Eichler E.E."/>
            <person name="Bork P."/>
            <person name="Suyama M."/>
            <person name="Torrents D."/>
            <person name="Waterston R.H."/>
            <person name="Wilson R.K."/>
        </authorList>
    </citation>
    <scope>NUCLEOTIDE SEQUENCE [LARGE SCALE GENOMIC DNA]</scope>
</reference>
<reference key="4">
    <citation type="journal article" date="2004" name="Genome Res.">
        <title>The status, quality, and expansion of the NIH full-length cDNA project: the Mammalian Gene Collection (MGC).</title>
        <authorList>
            <consortium name="The MGC Project Team"/>
        </authorList>
    </citation>
    <scope>NUCLEOTIDE SEQUENCE [LARGE SCALE MRNA] (ISOFORM 1)</scope>
    <source>
        <tissue>Duodenum</tissue>
    </source>
</reference>
<reference key="5">
    <citation type="journal article" date="1993" name="Gene">
        <title>The human brain homeogene, DLX-2: cDNA sequence and alignment with the murine homologue.</title>
        <authorList>
            <person name="Selski D.J."/>
            <person name="Thomas N.E."/>
            <person name="Coleman P.D."/>
            <person name="Rogers K.E."/>
        </authorList>
    </citation>
    <scope>NUCLEOTIDE SEQUENCE [MRNA] OF 85-328 (ISOFORM 1)</scope>
    <source>
        <tissue>Brain</tissue>
    </source>
</reference>
<reference key="6">
    <citation type="journal article" date="1994" name="Proc. Natl. Acad. Sci. U.S.A.">
        <title>Cloning and characterization of two members of the vertebrate Dlx gene family.</title>
        <authorList>
            <person name="Simeone A."/>
            <person name="Acampora D."/>
            <person name="Pannese M."/>
            <person name="D'Esposito M."/>
            <person name="Stornaiuolo A."/>
            <person name="Gulisano M."/>
            <person name="Mallamaci A."/>
            <person name="Kastury K."/>
            <person name="Druck T."/>
            <person name="Huebner K."/>
            <person name="Boncinelli E."/>
        </authorList>
    </citation>
    <scope>NUCLEOTIDE SEQUENCE OF 152-217</scope>
    <source>
        <tissue>Embryo</tissue>
    </source>
</reference>
<reference key="7">
    <citation type="journal article" date="2008" name="J. Proteome Res.">
        <title>Combining protein-based IMAC, peptide-based IMAC, and MudPIT for efficient phosphoproteomic analysis.</title>
        <authorList>
            <person name="Cantin G.T."/>
            <person name="Yi W."/>
            <person name="Lu B."/>
            <person name="Park S.K."/>
            <person name="Xu T."/>
            <person name="Lee J.-D."/>
            <person name="Yates J.R. III"/>
        </authorList>
    </citation>
    <scope>PHOSPHORYLATION [LARGE SCALE ANALYSIS] AT SER-232</scope>
    <scope>IDENTIFICATION BY MASS SPECTROMETRY [LARGE SCALE ANALYSIS]</scope>
    <source>
        <tissue>Cervix carcinoma</tissue>
    </source>
</reference>
<reference key="8">
    <citation type="journal article" date="2008" name="Proc. Natl. Acad. Sci. U.S.A.">
        <title>A quantitative atlas of mitotic phosphorylation.</title>
        <authorList>
            <person name="Dephoure N."/>
            <person name="Zhou C."/>
            <person name="Villen J."/>
            <person name="Beausoleil S.A."/>
            <person name="Bakalarski C.E."/>
            <person name="Elledge S.J."/>
            <person name="Gygi S.P."/>
        </authorList>
    </citation>
    <scope>IDENTIFICATION BY MASS SPECTROMETRY [LARGE SCALE ANALYSIS]</scope>
    <source>
        <tissue>Cervix carcinoma</tissue>
    </source>
</reference>
<accession>Q07687</accession>
<accession>B4DMK4</accession>
<accession>B7ZA14</accession>
<evidence type="ECO:0000250" key="1">
    <source>
        <dbReference type="UniProtKB" id="P40764"/>
    </source>
</evidence>
<evidence type="ECO:0000255" key="2">
    <source>
        <dbReference type="PROSITE-ProRule" id="PRU00108"/>
    </source>
</evidence>
<evidence type="ECO:0000256" key="3">
    <source>
        <dbReference type="SAM" id="MobiDB-lite"/>
    </source>
</evidence>
<evidence type="ECO:0000303" key="4">
    <source>
    </source>
</evidence>
<evidence type="ECO:0000305" key="5"/>
<evidence type="ECO:0007744" key="6">
    <source>
    </source>
</evidence>
<name>DLX2_HUMAN</name>
<keyword id="KW-0010">Activator</keyword>
<keyword id="KW-0025">Alternative splicing</keyword>
<keyword id="KW-0217">Developmental protein</keyword>
<keyword id="KW-0221">Differentiation</keyword>
<keyword id="KW-0238">DNA-binding</keyword>
<keyword id="KW-0371">Homeobox</keyword>
<keyword id="KW-0539">Nucleus</keyword>
<keyword id="KW-0597">Phosphoprotein</keyword>
<keyword id="KW-1267">Proteomics identification</keyword>
<keyword id="KW-1185">Reference proteome</keyword>
<keyword id="KW-0804">Transcription</keyword>
<keyword id="KW-0805">Transcription regulation</keyword>
<proteinExistence type="evidence at protein level"/>
<feature type="chain" id="PRO_0000049023" description="Homeobox protein DLX-2">
    <location>
        <begin position="1"/>
        <end position="328"/>
    </location>
</feature>
<feature type="DNA-binding region" description="Homeobox" evidence="2">
    <location>
        <begin position="152"/>
        <end position="211"/>
    </location>
</feature>
<feature type="region of interest" description="Disordered" evidence="3">
    <location>
        <begin position="16"/>
        <end position="81"/>
    </location>
</feature>
<feature type="region of interest" description="Disordered" evidence="3">
    <location>
        <begin position="211"/>
        <end position="270"/>
    </location>
</feature>
<feature type="region of interest" description="Disordered" evidence="3">
    <location>
        <begin position="300"/>
        <end position="328"/>
    </location>
</feature>
<feature type="compositionally biased region" description="Polar residues" evidence="3">
    <location>
        <begin position="16"/>
        <end position="28"/>
    </location>
</feature>
<feature type="compositionally biased region" description="Polar residues" evidence="3">
    <location>
        <begin position="52"/>
        <end position="72"/>
    </location>
</feature>
<feature type="compositionally biased region" description="Gly residues" evidence="3">
    <location>
        <begin position="250"/>
        <end position="264"/>
    </location>
</feature>
<feature type="modified residue" description="Phosphoserine" evidence="6">
    <location>
        <position position="232"/>
    </location>
</feature>
<feature type="splice variant" id="VSP_054287" description="In isoform 2." evidence="4">
    <original>KIWFQNRRSKFKKMWKSGEIP</original>
    <variation>GLAPCRGEESAGLRWLGSRRV</variation>
    <location>
        <begin position="197"/>
        <end position="217"/>
    </location>
</feature>
<feature type="splice variant" id="VSP_054288" description="In isoform 2." evidence="4">
    <location>
        <begin position="218"/>
        <end position="328"/>
    </location>
</feature>
<feature type="sequence conflict" description="In Ref. 2; BAG59916." evidence="5" ref="2">
    <original>A</original>
    <variation>V</variation>
    <location>
        <position position="178"/>
    </location>
</feature>
<protein>
    <recommendedName>
        <fullName>Homeobox protein DLX-2</fullName>
    </recommendedName>
</protein>
<gene>
    <name type="primary">DLX2</name>
</gene>